<sequence>MAAKDVKFGNDARVKMLRGVNVLADAVKVTLGPKGRNVVLDKSFGAPTITKDGVSVAREIELEDKFENMGAQMVKEVASKANDAAGDGTTTATVLAQAIVNEGLKAVAAGMNPMDLKRGIDKAVVAAVEELKALSVPCSDSKAIAQVGTISANSDETVGKLIAEAMDKVGKEGVITVEDGTGLEDELDVVEGMQFDRGYLSPYFINKPDTGAVELESPFILLADKKISNIREMLPVLEAVAKAGKPLVIIAEDVEGEALATLVVNTMRGIVKVAAVKAPGFGDRRKAMLQDIATLTGGTVISEEIGMELEKATLEDLGQAKRVVINKDTTTIIDGVGEEAAIQGRVAQIRKQIEEATSDYDREKLQERVAKLAGGVAVIKVGAATEVEMKEKKARVDDALHATRAAVEEGVVAGGGVALVRVAAKIAGLTGQNEDQNVGIKVALRAMEAPLRQIVSNAGEEPSVVANNVKAGDGNYGYNAATEEYGNMIDFGILDPTKVTRSALQYAASVAGLMITTECMVTDLPKGDAPDLGAAGGMGGMGGMGGMM</sequence>
<organism>
    <name type="scientific">Klebsiella aerogenes (strain ATCC 13048 / DSM 30053 / CCUG 1429 / JCM 1235 / KCTC 2190 / NBRC 13534 / NCIMB 10102 / NCTC 10006 / CDC 819-56)</name>
    <name type="common">Enterobacter aerogenes</name>
    <dbReference type="NCBI Taxonomy" id="1028307"/>
    <lineage>
        <taxon>Bacteria</taxon>
        <taxon>Pseudomonadati</taxon>
        <taxon>Pseudomonadota</taxon>
        <taxon>Gammaproteobacteria</taxon>
        <taxon>Enterobacterales</taxon>
        <taxon>Enterobacteriaceae</taxon>
        <taxon>Klebsiella/Raoultella group</taxon>
        <taxon>Klebsiella</taxon>
    </lineage>
</organism>
<dbReference type="EC" id="5.6.1.7" evidence="1"/>
<dbReference type="EMBL" id="CP002824">
    <property type="protein sequence ID" value="AEG96747.1"/>
    <property type="molecule type" value="Genomic_DNA"/>
</dbReference>
<dbReference type="EMBL" id="AB008141">
    <property type="protein sequence ID" value="BAA25215.1"/>
    <property type="molecule type" value="Genomic_DNA"/>
</dbReference>
<dbReference type="RefSeq" id="WP_015368665.1">
    <property type="nucleotide sequence ID" value="NC_015663.1"/>
</dbReference>
<dbReference type="RefSeq" id="YP_004592026.1">
    <property type="nucleotide sequence ID" value="NC_015663.1"/>
</dbReference>
<dbReference type="SMR" id="O66198"/>
<dbReference type="MoonProt" id="O66198"/>
<dbReference type="GeneID" id="93310002"/>
<dbReference type="KEGG" id="eae:EAE_09135"/>
<dbReference type="PATRIC" id="fig|1028307.3.peg.1815"/>
<dbReference type="eggNOG" id="COG0459">
    <property type="taxonomic scope" value="Bacteria"/>
</dbReference>
<dbReference type="HOGENOM" id="CLU_016503_3_0_6"/>
<dbReference type="OrthoDB" id="9766614at2"/>
<dbReference type="Proteomes" id="UP000008881">
    <property type="component" value="Chromosome"/>
</dbReference>
<dbReference type="GO" id="GO:0005737">
    <property type="term" value="C:cytoplasm"/>
    <property type="evidence" value="ECO:0007669"/>
    <property type="project" value="UniProtKB-SubCell"/>
</dbReference>
<dbReference type="GO" id="GO:0005524">
    <property type="term" value="F:ATP binding"/>
    <property type="evidence" value="ECO:0007669"/>
    <property type="project" value="UniProtKB-UniRule"/>
</dbReference>
<dbReference type="GO" id="GO:0140662">
    <property type="term" value="F:ATP-dependent protein folding chaperone"/>
    <property type="evidence" value="ECO:0007669"/>
    <property type="project" value="InterPro"/>
</dbReference>
<dbReference type="GO" id="GO:0016853">
    <property type="term" value="F:isomerase activity"/>
    <property type="evidence" value="ECO:0007669"/>
    <property type="project" value="UniProtKB-KW"/>
</dbReference>
<dbReference type="GO" id="GO:0051082">
    <property type="term" value="F:unfolded protein binding"/>
    <property type="evidence" value="ECO:0007669"/>
    <property type="project" value="UniProtKB-UniRule"/>
</dbReference>
<dbReference type="GO" id="GO:0044403">
    <property type="term" value="P:biological process involved in symbiotic interaction"/>
    <property type="evidence" value="ECO:0000315"/>
    <property type="project" value="CAFA"/>
</dbReference>
<dbReference type="GO" id="GO:0042026">
    <property type="term" value="P:protein refolding"/>
    <property type="evidence" value="ECO:0007669"/>
    <property type="project" value="UniProtKB-UniRule"/>
</dbReference>
<dbReference type="CDD" id="cd03344">
    <property type="entry name" value="GroEL"/>
    <property type="match status" value="1"/>
</dbReference>
<dbReference type="FunFam" id="1.10.560.10:FF:000001">
    <property type="entry name" value="60 kDa chaperonin"/>
    <property type="match status" value="1"/>
</dbReference>
<dbReference type="FunFam" id="3.50.7.10:FF:000001">
    <property type="entry name" value="60 kDa chaperonin"/>
    <property type="match status" value="1"/>
</dbReference>
<dbReference type="Gene3D" id="3.50.7.10">
    <property type="entry name" value="GroEL"/>
    <property type="match status" value="1"/>
</dbReference>
<dbReference type="Gene3D" id="1.10.560.10">
    <property type="entry name" value="GroEL-like equatorial domain"/>
    <property type="match status" value="1"/>
</dbReference>
<dbReference type="Gene3D" id="3.30.260.10">
    <property type="entry name" value="TCP-1-like chaperonin intermediate domain"/>
    <property type="match status" value="1"/>
</dbReference>
<dbReference type="HAMAP" id="MF_00600">
    <property type="entry name" value="CH60"/>
    <property type="match status" value="1"/>
</dbReference>
<dbReference type="InterPro" id="IPR018370">
    <property type="entry name" value="Chaperonin_Cpn60_CS"/>
</dbReference>
<dbReference type="InterPro" id="IPR001844">
    <property type="entry name" value="Cpn60/GroEL"/>
</dbReference>
<dbReference type="InterPro" id="IPR002423">
    <property type="entry name" value="Cpn60/GroEL/TCP-1"/>
</dbReference>
<dbReference type="InterPro" id="IPR027409">
    <property type="entry name" value="GroEL-like_apical_dom_sf"/>
</dbReference>
<dbReference type="InterPro" id="IPR027413">
    <property type="entry name" value="GROEL-like_equatorial_sf"/>
</dbReference>
<dbReference type="InterPro" id="IPR027410">
    <property type="entry name" value="TCP-1-like_intermed_sf"/>
</dbReference>
<dbReference type="NCBIfam" id="TIGR02348">
    <property type="entry name" value="GroEL"/>
    <property type="match status" value="1"/>
</dbReference>
<dbReference type="NCBIfam" id="NF000592">
    <property type="entry name" value="PRK00013.1"/>
    <property type="match status" value="1"/>
</dbReference>
<dbReference type="NCBIfam" id="NF009487">
    <property type="entry name" value="PRK12849.1"/>
    <property type="match status" value="1"/>
</dbReference>
<dbReference type="NCBIfam" id="NF009488">
    <property type="entry name" value="PRK12850.1"/>
    <property type="match status" value="1"/>
</dbReference>
<dbReference type="NCBIfam" id="NF009489">
    <property type="entry name" value="PRK12851.1"/>
    <property type="match status" value="1"/>
</dbReference>
<dbReference type="PANTHER" id="PTHR45633">
    <property type="entry name" value="60 KDA HEAT SHOCK PROTEIN, MITOCHONDRIAL"/>
    <property type="match status" value="1"/>
</dbReference>
<dbReference type="Pfam" id="PF00118">
    <property type="entry name" value="Cpn60_TCP1"/>
    <property type="match status" value="1"/>
</dbReference>
<dbReference type="PRINTS" id="PR00298">
    <property type="entry name" value="CHAPERONIN60"/>
</dbReference>
<dbReference type="SUPFAM" id="SSF52029">
    <property type="entry name" value="GroEL apical domain-like"/>
    <property type="match status" value="1"/>
</dbReference>
<dbReference type="SUPFAM" id="SSF48592">
    <property type="entry name" value="GroEL equatorial domain-like"/>
    <property type="match status" value="1"/>
</dbReference>
<dbReference type="SUPFAM" id="SSF54849">
    <property type="entry name" value="GroEL-intermediate domain like"/>
    <property type="match status" value="1"/>
</dbReference>
<dbReference type="PROSITE" id="PS00296">
    <property type="entry name" value="CHAPERONINS_CPN60"/>
    <property type="match status" value="1"/>
</dbReference>
<comment type="function">
    <text evidence="1">Together with its co-chaperonin GroES, plays an essential role in assisting protein folding. The GroEL-GroES system forms a nano-cage that allows encapsulation of the non-native substrate proteins and provides a physical environment optimized to promote and accelerate protein folding.</text>
</comment>
<comment type="catalytic activity">
    <reaction evidence="1">
        <text>ATP + H2O + a folded polypeptide = ADP + phosphate + an unfolded polypeptide.</text>
        <dbReference type="EC" id="5.6.1.7"/>
    </reaction>
</comment>
<comment type="subunit">
    <text evidence="1">Forms a cylinder of 14 subunits composed of two heptameric rings stacked back-to-back. Interacts with the co-chaperonin GroES.</text>
</comment>
<comment type="subcellular location">
    <subcellularLocation>
        <location evidence="1">Cytoplasm</location>
    </subcellularLocation>
</comment>
<comment type="similarity">
    <text evidence="1">Belongs to the chaperonin (HSP60) family.</text>
</comment>
<feature type="chain" id="PRO_0000063367" description="Chaperonin GroEL">
    <location>
        <begin position="1"/>
        <end position="548"/>
    </location>
</feature>
<feature type="binding site" evidence="1">
    <location>
        <begin position="30"/>
        <end position="33"/>
    </location>
    <ligand>
        <name>ATP</name>
        <dbReference type="ChEBI" id="CHEBI:30616"/>
    </ligand>
</feature>
<feature type="binding site" evidence="1">
    <location>
        <position position="51"/>
    </location>
    <ligand>
        <name>ATP</name>
        <dbReference type="ChEBI" id="CHEBI:30616"/>
    </ligand>
</feature>
<feature type="binding site" evidence="1">
    <location>
        <begin position="87"/>
        <end position="91"/>
    </location>
    <ligand>
        <name>ATP</name>
        <dbReference type="ChEBI" id="CHEBI:30616"/>
    </ligand>
</feature>
<feature type="binding site" evidence="1">
    <location>
        <position position="415"/>
    </location>
    <ligand>
        <name>ATP</name>
        <dbReference type="ChEBI" id="CHEBI:30616"/>
    </ligand>
</feature>
<feature type="binding site" evidence="1">
    <location>
        <begin position="479"/>
        <end position="481"/>
    </location>
    <ligand>
        <name>ATP</name>
        <dbReference type="ChEBI" id="CHEBI:30616"/>
    </ligand>
</feature>
<feature type="binding site" evidence="1">
    <location>
        <position position="495"/>
    </location>
    <ligand>
        <name>ATP</name>
        <dbReference type="ChEBI" id="CHEBI:30616"/>
    </ligand>
</feature>
<reference key="1">
    <citation type="journal article" date="2012" name="J. Bacteriol.">
        <title>Complete genome sequence of Enterobacter aerogenes KCTC 2190.</title>
        <authorList>
            <person name="Shin S.H."/>
            <person name="Kim S."/>
            <person name="Kim J.Y."/>
            <person name="Lee S."/>
            <person name="Um Y."/>
            <person name="Oh M.K."/>
            <person name="Kim Y.R."/>
            <person name="Lee J."/>
            <person name="Yang K.S."/>
        </authorList>
    </citation>
    <scope>NUCLEOTIDE SEQUENCE [LARGE SCALE GENOMIC DNA]</scope>
    <source>
        <strain>ATCC 13048 / DSM 30053 / CCUG 1429 / JCM 1235 / KCTC 2190 / NBRC 13534 / NCIMB 10102 / NCTC 10006 / CDC 819-56</strain>
    </source>
</reference>
<reference key="2">
    <citation type="journal article" date="1997" name="J. Gen. Appl. Microbiol.">
        <title>Phylogenetical relationship based on groE genes among phenotypically related Enterobacter, Pantoea, Klebsiella, Serratia, and Erwinia species.</title>
        <authorList>
            <person name="Harada H."/>
            <person name="Ishikawa H."/>
        </authorList>
    </citation>
    <scope>NUCLEOTIDE SEQUENCE [GENOMIC DNA] OF 1-540</scope>
    <source>
        <strain>ATCC 13048 / DSM 30053 / CCUG 1429 / JCM 1235 / KCTC 2190 / NBRC 13534 / NCIMB 10102 / NCTC 10006 / CDC 819-56</strain>
    </source>
</reference>
<accession>O66198</accession>
<accession>G0E0C8</accession>
<evidence type="ECO:0000255" key="1">
    <source>
        <dbReference type="HAMAP-Rule" id="MF_00600"/>
    </source>
</evidence>
<name>CH60_KLEAK</name>
<protein>
    <recommendedName>
        <fullName evidence="1">Chaperonin GroEL</fullName>
        <ecNumber evidence="1">5.6.1.7</ecNumber>
    </recommendedName>
    <alternativeName>
        <fullName evidence="1">60 kDa chaperonin</fullName>
    </alternativeName>
    <alternativeName>
        <fullName evidence="1">Chaperonin-60</fullName>
        <shortName evidence="1">Cpn60</shortName>
    </alternativeName>
</protein>
<keyword id="KW-0067">ATP-binding</keyword>
<keyword id="KW-0143">Chaperone</keyword>
<keyword id="KW-0963">Cytoplasm</keyword>
<keyword id="KW-0413">Isomerase</keyword>
<keyword id="KW-0547">Nucleotide-binding</keyword>
<keyword id="KW-1185">Reference proteome</keyword>
<proteinExistence type="inferred from homology"/>
<gene>
    <name evidence="1" type="primary">groEL</name>
    <name evidence="1" type="synonym">groL</name>
    <name type="synonym">mopA</name>
    <name type="ordered locus">EAE_09135</name>
</gene>